<dbReference type="EMBL" id="AK136723">
    <property type="protein sequence ID" value="BAE23107.1"/>
    <property type="molecule type" value="mRNA"/>
</dbReference>
<dbReference type="EMBL" id="BC107347">
    <property type="protein sequence ID" value="AAI07348.1"/>
    <property type="molecule type" value="mRNA"/>
</dbReference>
<dbReference type="EMBL" id="BC107348">
    <property type="protein sequence ID" value="AAI07349.1"/>
    <property type="molecule type" value="mRNA"/>
</dbReference>
<dbReference type="CCDS" id="CCDS21650.1">
    <molecule id="Q3UW12-1"/>
</dbReference>
<dbReference type="RefSeq" id="NP_001028489.1">
    <molecule id="Q3UW12-1"/>
    <property type="nucleotide sequence ID" value="NM_001033317.3"/>
</dbReference>
<dbReference type="RefSeq" id="XP_006507717.1">
    <property type="nucleotide sequence ID" value="XM_006507654.2"/>
</dbReference>
<dbReference type="RefSeq" id="XP_011240046.1">
    <property type="nucleotide sequence ID" value="XM_011241744.2"/>
</dbReference>
<dbReference type="RefSeq" id="XP_017177672.1">
    <molecule id="Q3UW12-1"/>
    <property type="nucleotide sequence ID" value="XM_017322183.3"/>
</dbReference>
<dbReference type="RefSeq" id="XP_030098357.1">
    <molecule id="Q3UW12-2"/>
    <property type="nucleotide sequence ID" value="XM_030242497.2"/>
</dbReference>
<dbReference type="SMR" id="Q3UW12"/>
<dbReference type="FunCoup" id="Q3UW12">
    <property type="interactions" value="1318"/>
</dbReference>
<dbReference type="STRING" id="10090.ENSMUSP00000033187"/>
<dbReference type="TCDB" id="1.A.1.5.4">
    <property type="family name" value="the voltage-gated ion channel (vic) superfamily"/>
</dbReference>
<dbReference type="PhosphoSitePlus" id="Q3UW12"/>
<dbReference type="PaxDb" id="10090-ENSMUSP00000033187"/>
<dbReference type="ProteomicsDB" id="283400">
    <molecule id="Q3UW12-1"/>
</dbReference>
<dbReference type="ProteomicsDB" id="283401">
    <molecule id="Q3UW12-2"/>
</dbReference>
<dbReference type="Antibodypedia" id="58012">
    <property type="antibodies" value="96 antibodies from 22 providers"/>
</dbReference>
<dbReference type="DNASU" id="233649"/>
<dbReference type="Ensembl" id="ENSMUST00000033187.6">
    <molecule id="Q3UW12-1"/>
    <property type="protein sequence ID" value="ENSMUSP00000033187.5"/>
    <property type="gene ID" value="ENSMUSG00000030897.6"/>
</dbReference>
<dbReference type="Ensembl" id="ENSMUST00000210344.2">
    <molecule id="Q3UW12-2"/>
    <property type="protein sequence ID" value="ENSMUSP00000147387.2"/>
    <property type="gene ID" value="ENSMUSG00000030897.6"/>
</dbReference>
<dbReference type="GeneID" id="233649"/>
<dbReference type="KEGG" id="mmu:233649"/>
<dbReference type="UCSC" id="uc009iyc.1">
    <molecule id="Q3UW12-1"/>
    <property type="organism name" value="mouse"/>
</dbReference>
<dbReference type="AGR" id="MGI:2664099"/>
<dbReference type="CTD" id="1262"/>
<dbReference type="MGI" id="MGI:2664099">
    <property type="gene designation" value="Cnga4"/>
</dbReference>
<dbReference type="VEuPathDB" id="HostDB:ENSMUSG00000030897"/>
<dbReference type="eggNOG" id="KOG0500">
    <property type="taxonomic scope" value="Eukaryota"/>
</dbReference>
<dbReference type="GeneTree" id="ENSGT00940000159415"/>
<dbReference type="HOGENOM" id="CLU_005746_12_0_1"/>
<dbReference type="InParanoid" id="Q3UW12"/>
<dbReference type="OMA" id="HSYLVAW"/>
<dbReference type="OrthoDB" id="421226at2759"/>
<dbReference type="PhylomeDB" id="Q3UW12"/>
<dbReference type="TreeFam" id="TF319048"/>
<dbReference type="Reactome" id="R-MMU-5620916">
    <property type="pathway name" value="VxPx cargo-targeting to cilium"/>
</dbReference>
<dbReference type="BioGRID-ORCS" id="233649">
    <property type="hits" value="1 hit in 76 CRISPR screens"/>
</dbReference>
<dbReference type="PRO" id="PR:Q3UW12"/>
<dbReference type="Proteomes" id="UP000000589">
    <property type="component" value="Chromosome 7"/>
</dbReference>
<dbReference type="RNAct" id="Q3UW12">
    <property type="molecule type" value="protein"/>
</dbReference>
<dbReference type="Bgee" id="ENSMUSG00000030897">
    <property type="expression patterns" value="Expressed in olfactory epithelium and 14 other cell types or tissues"/>
</dbReference>
<dbReference type="GO" id="GO:0098804">
    <property type="term" value="C:non-motile cilium membrane"/>
    <property type="evidence" value="ECO:0000314"/>
    <property type="project" value="UniProtKB"/>
</dbReference>
<dbReference type="GO" id="GO:0005886">
    <property type="term" value="C:plasma membrane"/>
    <property type="evidence" value="ECO:0000304"/>
    <property type="project" value="Reactome"/>
</dbReference>
<dbReference type="GO" id="GO:0030552">
    <property type="term" value="F:cAMP binding"/>
    <property type="evidence" value="ECO:0007669"/>
    <property type="project" value="UniProtKB-KW"/>
</dbReference>
<dbReference type="GO" id="GO:0005221">
    <property type="term" value="F:intracellularly cyclic nucleotide-activated monoatomic cation channel activity"/>
    <property type="evidence" value="ECO:0007669"/>
    <property type="project" value="InterPro"/>
</dbReference>
<dbReference type="GO" id="GO:0005216">
    <property type="term" value="F:monoatomic ion channel activity"/>
    <property type="evidence" value="ECO:0000304"/>
    <property type="project" value="MGI"/>
</dbReference>
<dbReference type="GO" id="GO:0006816">
    <property type="term" value="P:calcium ion transport"/>
    <property type="evidence" value="ECO:0000250"/>
    <property type="project" value="UniProtKB"/>
</dbReference>
<dbReference type="GO" id="GO:0006813">
    <property type="term" value="P:potassium ion transport"/>
    <property type="evidence" value="ECO:0000250"/>
    <property type="project" value="UniProtKB"/>
</dbReference>
<dbReference type="GO" id="GO:0007608">
    <property type="term" value="P:sensory perception of smell"/>
    <property type="evidence" value="ECO:0000315"/>
    <property type="project" value="MGI"/>
</dbReference>
<dbReference type="GO" id="GO:0006814">
    <property type="term" value="P:sodium ion transport"/>
    <property type="evidence" value="ECO:0000250"/>
    <property type="project" value="UniProtKB"/>
</dbReference>
<dbReference type="CDD" id="cd00038">
    <property type="entry name" value="CAP_ED"/>
    <property type="match status" value="1"/>
</dbReference>
<dbReference type="FunFam" id="1.10.287.70:FF:000103">
    <property type="entry name" value="Cyclic nucleotide-gated cation channel alpha-4"/>
    <property type="match status" value="1"/>
</dbReference>
<dbReference type="FunFam" id="2.60.120.10:FF:000046">
    <property type="entry name" value="Cyclic nucleotide-gated cation channel alpha-4"/>
    <property type="match status" value="1"/>
</dbReference>
<dbReference type="FunFam" id="1.10.287.630:FF:000005">
    <property type="entry name" value="cyclic nucleotide-gated cation channel alpha-4"/>
    <property type="match status" value="1"/>
</dbReference>
<dbReference type="FunFam" id="1.20.5.300:FF:000005">
    <property type="entry name" value="cyclic nucleotide-gated cation channel alpha-4"/>
    <property type="match status" value="1"/>
</dbReference>
<dbReference type="Gene3D" id="1.10.287.70">
    <property type="match status" value="1"/>
</dbReference>
<dbReference type="Gene3D" id="1.20.5.300">
    <property type="match status" value="1"/>
</dbReference>
<dbReference type="Gene3D" id="1.10.287.630">
    <property type="entry name" value="Helix hairpin bin"/>
    <property type="match status" value="1"/>
</dbReference>
<dbReference type="Gene3D" id="2.60.120.10">
    <property type="entry name" value="Jelly Rolls"/>
    <property type="match status" value="1"/>
</dbReference>
<dbReference type="InterPro" id="IPR032406">
    <property type="entry name" value="CLZ_dom"/>
</dbReference>
<dbReference type="InterPro" id="IPR050866">
    <property type="entry name" value="CNG_cation_channel"/>
</dbReference>
<dbReference type="InterPro" id="IPR018488">
    <property type="entry name" value="cNMP-bd_CS"/>
</dbReference>
<dbReference type="InterPro" id="IPR000595">
    <property type="entry name" value="cNMP-bd_dom"/>
</dbReference>
<dbReference type="InterPro" id="IPR018490">
    <property type="entry name" value="cNMP-bd_dom_sf"/>
</dbReference>
<dbReference type="InterPro" id="IPR005821">
    <property type="entry name" value="Ion_trans_dom"/>
</dbReference>
<dbReference type="InterPro" id="IPR014710">
    <property type="entry name" value="RmlC-like_jellyroll"/>
</dbReference>
<dbReference type="PANTHER" id="PTHR45638:SF2">
    <property type="entry name" value="CYCLIC NUCLEOTIDE-GATED CATION CHANNEL ALPHA-4"/>
    <property type="match status" value="1"/>
</dbReference>
<dbReference type="PANTHER" id="PTHR45638">
    <property type="entry name" value="CYCLIC NUCLEOTIDE-GATED CATION CHANNEL SUBUNIT A"/>
    <property type="match status" value="1"/>
</dbReference>
<dbReference type="Pfam" id="PF16526">
    <property type="entry name" value="CLZ"/>
    <property type="match status" value="1"/>
</dbReference>
<dbReference type="Pfam" id="PF00027">
    <property type="entry name" value="cNMP_binding"/>
    <property type="match status" value="1"/>
</dbReference>
<dbReference type="Pfam" id="PF00520">
    <property type="entry name" value="Ion_trans"/>
    <property type="match status" value="1"/>
</dbReference>
<dbReference type="SMART" id="SM00100">
    <property type="entry name" value="cNMP"/>
    <property type="match status" value="1"/>
</dbReference>
<dbReference type="SUPFAM" id="SSF51206">
    <property type="entry name" value="cAMP-binding domain-like"/>
    <property type="match status" value="1"/>
</dbReference>
<dbReference type="SUPFAM" id="SSF81324">
    <property type="entry name" value="Voltage-gated potassium channels"/>
    <property type="match status" value="1"/>
</dbReference>
<dbReference type="PROSITE" id="PS00888">
    <property type="entry name" value="CNMP_BINDING_1"/>
    <property type="match status" value="1"/>
</dbReference>
<dbReference type="PROSITE" id="PS00889">
    <property type="entry name" value="CNMP_BINDING_2"/>
    <property type="match status" value="1"/>
</dbReference>
<dbReference type="PROSITE" id="PS50042">
    <property type="entry name" value="CNMP_BINDING_3"/>
    <property type="match status" value="1"/>
</dbReference>
<reference key="1">
    <citation type="journal article" date="2005" name="Science">
        <title>The transcriptional landscape of the mammalian genome.</title>
        <authorList>
            <person name="Carninci P."/>
            <person name="Kasukawa T."/>
            <person name="Katayama S."/>
            <person name="Gough J."/>
            <person name="Frith M.C."/>
            <person name="Maeda N."/>
            <person name="Oyama R."/>
            <person name="Ravasi T."/>
            <person name="Lenhard B."/>
            <person name="Wells C."/>
            <person name="Kodzius R."/>
            <person name="Shimokawa K."/>
            <person name="Bajic V.B."/>
            <person name="Brenner S.E."/>
            <person name="Batalov S."/>
            <person name="Forrest A.R."/>
            <person name="Zavolan M."/>
            <person name="Davis M.J."/>
            <person name="Wilming L.G."/>
            <person name="Aidinis V."/>
            <person name="Allen J.E."/>
            <person name="Ambesi-Impiombato A."/>
            <person name="Apweiler R."/>
            <person name="Aturaliya R.N."/>
            <person name="Bailey T.L."/>
            <person name="Bansal M."/>
            <person name="Baxter L."/>
            <person name="Beisel K.W."/>
            <person name="Bersano T."/>
            <person name="Bono H."/>
            <person name="Chalk A.M."/>
            <person name="Chiu K.P."/>
            <person name="Choudhary V."/>
            <person name="Christoffels A."/>
            <person name="Clutterbuck D.R."/>
            <person name="Crowe M.L."/>
            <person name="Dalla E."/>
            <person name="Dalrymple B.P."/>
            <person name="de Bono B."/>
            <person name="Della Gatta G."/>
            <person name="di Bernardo D."/>
            <person name="Down T."/>
            <person name="Engstrom P."/>
            <person name="Fagiolini M."/>
            <person name="Faulkner G."/>
            <person name="Fletcher C.F."/>
            <person name="Fukushima T."/>
            <person name="Furuno M."/>
            <person name="Futaki S."/>
            <person name="Gariboldi M."/>
            <person name="Georgii-Hemming P."/>
            <person name="Gingeras T.R."/>
            <person name="Gojobori T."/>
            <person name="Green R.E."/>
            <person name="Gustincich S."/>
            <person name="Harbers M."/>
            <person name="Hayashi Y."/>
            <person name="Hensch T.K."/>
            <person name="Hirokawa N."/>
            <person name="Hill D."/>
            <person name="Huminiecki L."/>
            <person name="Iacono M."/>
            <person name="Ikeo K."/>
            <person name="Iwama A."/>
            <person name="Ishikawa T."/>
            <person name="Jakt M."/>
            <person name="Kanapin A."/>
            <person name="Katoh M."/>
            <person name="Kawasawa Y."/>
            <person name="Kelso J."/>
            <person name="Kitamura H."/>
            <person name="Kitano H."/>
            <person name="Kollias G."/>
            <person name="Krishnan S.P."/>
            <person name="Kruger A."/>
            <person name="Kummerfeld S.K."/>
            <person name="Kurochkin I.V."/>
            <person name="Lareau L.F."/>
            <person name="Lazarevic D."/>
            <person name="Lipovich L."/>
            <person name="Liu J."/>
            <person name="Liuni S."/>
            <person name="McWilliam S."/>
            <person name="Madan Babu M."/>
            <person name="Madera M."/>
            <person name="Marchionni L."/>
            <person name="Matsuda H."/>
            <person name="Matsuzawa S."/>
            <person name="Miki H."/>
            <person name="Mignone F."/>
            <person name="Miyake S."/>
            <person name="Morris K."/>
            <person name="Mottagui-Tabar S."/>
            <person name="Mulder N."/>
            <person name="Nakano N."/>
            <person name="Nakauchi H."/>
            <person name="Ng P."/>
            <person name="Nilsson R."/>
            <person name="Nishiguchi S."/>
            <person name="Nishikawa S."/>
            <person name="Nori F."/>
            <person name="Ohara O."/>
            <person name="Okazaki Y."/>
            <person name="Orlando V."/>
            <person name="Pang K.C."/>
            <person name="Pavan W.J."/>
            <person name="Pavesi G."/>
            <person name="Pesole G."/>
            <person name="Petrovsky N."/>
            <person name="Piazza S."/>
            <person name="Reed J."/>
            <person name="Reid J.F."/>
            <person name="Ring B.Z."/>
            <person name="Ringwald M."/>
            <person name="Rost B."/>
            <person name="Ruan Y."/>
            <person name="Salzberg S.L."/>
            <person name="Sandelin A."/>
            <person name="Schneider C."/>
            <person name="Schoenbach C."/>
            <person name="Sekiguchi K."/>
            <person name="Semple C.A."/>
            <person name="Seno S."/>
            <person name="Sessa L."/>
            <person name="Sheng Y."/>
            <person name="Shibata Y."/>
            <person name="Shimada H."/>
            <person name="Shimada K."/>
            <person name="Silva D."/>
            <person name="Sinclair B."/>
            <person name="Sperling S."/>
            <person name="Stupka E."/>
            <person name="Sugiura K."/>
            <person name="Sultana R."/>
            <person name="Takenaka Y."/>
            <person name="Taki K."/>
            <person name="Tammoja K."/>
            <person name="Tan S.L."/>
            <person name="Tang S."/>
            <person name="Taylor M.S."/>
            <person name="Tegner J."/>
            <person name="Teichmann S.A."/>
            <person name="Ueda H.R."/>
            <person name="van Nimwegen E."/>
            <person name="Verardo R."/>
            <person name="Wei C.L."/>
            <person name="Yagi K."/>
            <person name="Yamanishi H."/>
            <person name="Zabarovsky E."/>
            <person name="Zhu S."/>
            <person name="Zimmer A."/>
            <person name="Hide W."/>
            <person name="Bult C."/>
            <person name="Grimmond S.M."/>
            <person name="Teasdale R.D."/>
            <person name="Liu E.T."/>
            <person name="Brusic V."/>
            <person name="Quackenbush J."/>
            <person name="Wahlestedt C."/>
            <person name="Mattick J.S."/>
            <person name="Hume D.A."/>
            <person name="Kai C."/>
            <person name="Sasaki D."/>
            <person name="Tomaru Y."/>
            <person name="Fukuda S."/>
            <person name="Kanamori-Katayama M."/>
            <person name="Suzuki M."/>
            <person name="Aoki J."/>
            <person name="Arakawa T."/>
            <person name="Iida J."/>
            <person name="Imamura K."/>
            <person name="Itoh M."/>
            <person name="Kato T."/>
            <person name="Kawaji H."/>
            <person name="Kawagashira N."/>
            <person name="Kawashima T."/>
            <person name="Kojima M."/>
            <person name="Kondo S."/>
            <person name="Konno H."/>
            <person name="Nakano K."/>
            <person name="Ninomiya N."/>
            <person name="Nishio T."/>
            <person name="Okada M."/>
            <person name="Plessy C."/>
            <person name="Shibata K."/>
            <person name="Shiraki T."/>
            <person name="Suzuki S."/>
            <person name="Tagami M."/>
            <person name="Waki K."/>
            <person name="Watahiki A."/>
            <person name="Okamura-Oho Y."/>
            <person name="Suzuki H."/>
            <person name="Kawai J."/>
            <person name="Hayashizaki Y."/>
        </authorList>
    </citation>
    <scope>NUCLEOTIDE SEQUENCE [LARGE SCALE MRNA] (ISOFORM 1)</scope>
    <source>
        <strain>C57BL/6J</strain>
        <tissue>Epididymis</tissue>
    </source>
</reference>
<reference key="2">
    <citation type="journal article" date="2004" name="Genome Res.">
        <title>The status, quality, and expansion of the NIH full-length cDNA project: the Mammalian Gene Collection (MGC).</title>
        <authorList>
            <consortium name="The MGC Project Team"/>
        </authorList>
    </citation>
    <scope>NUCLEOTIDE SEQUENCE [LARGE SCALE MRNA] (ISOFORMS 1 AND 2)</scope>
</reference>
<reference key="3">
    <citation type="journal article" date="2001" name="Science">
        <title>Nomenclature for ion channel subunits.</title>
        <authorList>
            <person name="Bradley J."/>
            <person name="Frings S."/>
            <person name="Yau K.W."/>
            <person name="Reed R."/>
        </authorList>
    </citation>
    <scope>NOMENCLATURE</scope>
</reference>
<reference key="4">
    <citation type="journal article" date="2001" name="Science">
        <title>Central role of the CNGA4 channel subunit in Ca2+-calmodulin-dependent odor adaptation.</title>
        <authorList>
            <person name="Munger S.D."/>
            <person name="Lane A.P."/>
            <person name="Zhong H."/>
            <person name="Leinders-Zufall T."/>
            <person name="Yau K.-W."/>
            <person name="Zufall F."/>
            <person name="Reed R.R."/>
        </authorList>
    </citation>
    <scope>FUNCTION</scope>
    <scope>SUBCELLULAR LOCATION</scope>
    <scope>TISSUE SPECIFICITY</scope>
</reference>
<reference key="5">
    <citation type="journal article" date="2003" name="Proc. Natl. Acad. Sci. U.S.A.">
        <title>Importance of the CNGA4 channel gene for odor discrimination and adaptation in behaving mice.</title>
        <authorList>
            <person name="Kelliher K.R."/>
            <person name="Ziesmann J."/>
            <person name="Munger S.D."/>
            <person name="Reed R.R."/>
            <person name="Zufall F."/>
        </authorList>
    </citation>
    <scope>FUNCTION</scope>
</reference>
<keyword id="KW-0025">Alternative splicing</keyword>
<keyword id="KW-0114">cAMP</keyword>
<keyword id="KW-0116">cAMP-binding</keyword>
<keyword id="KW-1003">Cell membrane</keyword>
<keyword id="KW-0966">Cell projection</keyword>
<keyword id="KW-0175">Coiled coil</keyword>
<keyword id="KW-0407">Ion channel</keyword>
<keyword id="KW-0406">Ion transport</keyword>
<keyword id="KW-1071">Ligand-gated ion channel</keyword>
<keyword id="KW-0472">Membrane</keyword>
<keyword id="KW-0547">Nucleotide-binding</keyword>
<keyword id="KW-0552">Olfaction</keyword>
<keyword id="KW-1185">Reference proteome</keyword>
<keyword id="KW-0716">Sensory transduction</keyword>
<keyword id="KW-0812">Transmembrane</keyword>
<keyword id="KW-1133">Transmembrane helix</keyword>
<keyword id="KW-0813">Transport</keyword>
<feature type="chain" id="PRO_0000317108" description="Cyclic nucleotide-gated channel alpha-4">
    <location>
        <begin position="1"/>
        <end position="575"/>
    </location>
</feature>
<feature type="topological domain" description="Cytoplasmic" evidence="12">
    <location>
        <begin position="1"/>
        <end position="38"/>
    </location>
</feature>
<feature type="transmembrane region" description="Helical; Name=S1" evidence="2">
    <location>
        <begin position="39"/>
        <end position="60"/>
    </location>
</feature>
<feature type="topological domain" description="Extracellular" evidence="12">
    <location>
        <begin position="61"/>
        <end position="70"/>
    </location>
</feature>
<feature type="transmembrane region" description="Helical; Name=S2" evidence="2">
    <location>
        <begin position="71"/>
        <end position="91"/>
    </location>
</feature>
<feature type="topological domain" description="Cytoplasmic" evidence="12">
    <location>
        <begin position="92"/>
        <end position="116"/>
    </location>
</feature>
<feature type="transmembrane region" description="Helical; Name=S3" evidence="2">
    <location>
        <begin position="117"/>
        <end position="135"/>
    </location>
</feature>
<feature type="topological domain" description="Extracellular" evidence="12">
    <location>
        <begin position="136"/>
        <end position="140"/>
    </location>
</feature>
<feature type="transmembrane region" description="Helical; Name=S4" evidence="2">
    <location>
        <begin position="141"/>
        <end position="159"/>
    </location>
</feature>
<feature type="topological domain" description="Cytoplasmic" evidence="12">
    <location>
        <begin position="160"/>
        <end position="166"/>
    </location>
</feature>
<feature type="transmembrane region" description="Helical; Name=S5" evidence="2">
    <location>
        <begin position="167"/>
        <end position="190"/>
    </location>
</feature>
<feature type="topological domain" description="Extracellular" evidence="12">
    <location>
        <begin position="191"/>
        <end position="213"/>
    </location>
</feature>
<feature type="transmembrane region" description="Helical; Name=P-helix" evidence="2">
    <location>
        <begin position="214"/>
        <end position="248"/>
    </location>
</feature>
<feature type="transmembrane region" description="Helical; Name=S6" evidence="2">
    <location>
        <begin position="249"/>
        <end position="273"/>
    </location>
</feature>
<feature type="topological domain" description="Cytoplasmic" evidence="12">
    <location>
        <begin position="274"/>
        <end position="575"/>
    </location>
</feature>
<feature type="region of interest" description="Ion conduction pathway" evidence="2">
    <location>
        <begin position="164"/>
        <end position="272"/>
    </location>
</feature>
<feature type="region of interest" description="Selectivity filter" evidence="2">
    <location>
        <begin position="231"/>
        <end position="234"/>
    </location>
</feature>
<feature type="region of interest" description="C-linker" evidence="2">
    <location>
        <begin position="274"/>
        <end position="350"/>
    </location>
</feature>
<feature type="region of interest" description="Cyclic nucleotide-binding domain" evidence="2">
    <location>
        <begin position="354"/>
        <end position="474"/>
    </location>
</feature>
<feature type="region of interest" description="Disordered" evidence="7">
    <location>
        <begin position="536"/>
        <end position="575"/>
    </location>
</feature>
<feature type="coiled-coil region" evidence="2">
    <location>
        <begin position="493"/>
        <end position="547"/>
    </location>
</feature>
<feature type="short sequence motif" description="IQ-type" evidence="1">
    <location>
        <begin position="292"/>
        <end position="302"/>
    </location>
</feature>
<feature type="compositionally biased region" description="Acidic residues" evidence="7">
    <location>
        <begin position="544"/>
        <end position="554"/>
    </location>
</feature>
<feature type="compositionally biased region" description="Basic and acidic residues" evidence="7">
    <location>
        <begin position="558"/>
        <end position="567"/>
    </location>
</feature>
<feature type="binding site">
    <location>
        <begin position="348"/>
        <end position="471"/>
    </location>
    <ligand>
        <name>a nucleoside 3',5'-cyclic phosphate</name>
        <dbReference type="ChEBI" id="CHEBI:58464"/>
    </ligand>
</feature>
<feature type="binding site" evidence="2">
    <location>
        <position position="414"/>
    </location>
    <ligand>
        <name>3',5'-cyclic GMP</name>
        <dbReference type="ChEBI" id="CHEBI:57746"/>
    </ligand>
</feature>
<feature type="binding site" evidence="2">
    <location>
        <position position="417"/>
    </location>
    <ligand>
        <name>3',5'-cyclic GMP</name>
        <dbReference type="ChEBI" id="CHEBI:57746"/>
    </ligand>
</feature>
<feature type="binding site" evidence="2">
    <location>
        <position position="430"/>
    </location>
    <ligand>
        <name>3',5'-cyclic AMP</name>
        <dbReference type="ChEBI" id="CHEBI:58165"/>
    </ligand>
</feature>
<feature type="binding site" evidence="2">
    <location>
        <position position="430"/>
    </location>
    <ligand>
        <name>3',5'-cyclic GMP</name>
        <dbReference type="ChEBI" id="CHEBI:57746"/>
    </ligand>
</feature>
<feature type="binding site" evidence="2">
    <location>
        <position position="431"/>
    </location>
    <ligand>
        <name>3',5'-cyclic AMP</name>
        <dbReference type="ChEBI" id="CHEBI:58165"/>
    </ligand>
</feature>
<feature type="binding site" evidence="2">
    <location>
        <position position="431"/>
    </location>
    <ligand>
        <name>3',5'-cyclic GMP</name>
        <dbReference type="ChEBI" id="CHEBI:57746"/>
    </ligand>
</feature>
<feature type="site" description="Central gate" evidence="2">
    <location>
        <position position="258"/>
    </location>
</feature>
<feature type="splice variant" id="VSP_030873" description="In isoform 2." evidence="11">
    <location>
        <begin position="1"/>
        <end position="103"/>
    </location>
</feature>
<gene>
    <name evidence="10 13" type="primary">Cnga4</name>
</gene>
<organism>
    <name type="scientific">Mus musculus</name>
    <name type="common">Mouse</name>
    <dbReference type="NCBI Taxonomy" id="10090"/>
    <lineage>
        <taxon>Eukaryota</taxon>
        <taxon>Metazoa</taxon>
        <taxon>Chordata</taxon>
        <taxon>Craniata</taxon>
        <taxon>Vertebrata</taxon>
        <taxon>Euteleostomi</taxon>
        <taxon>Mammalia</taxon>
        <taxon>Eutheria</taxon>
        <taxon>Euarchontoglires</taxon>
        <taxon>Glires</taxon>
        <taxon>Rodentia</taxon>
        <taxon>Myomorpha</taxon>
        <taxon>Muroidea</taxon>
        <taxon>Muridae</taxon>
        <taxon>Murinae</taxon>
        <taxon>Mus</taxon>
        <taxon>Mus</taxon>
    </lineage>
</organism>
<comment type="function">
    <text evidence="4 8 9">Pore-forming subunit of the olfactory cyclic nucleotide-gated channel. Operates in the cilia of olfactory sensory neurons where chemical stimulation of the odorant is converted to an electrical signal. Mediates odorant-induced cAMP-dependent Ca(2+) influx triggering neuron depolarization. The rise of intracellular Ca(2+) levels potentiates the olfactory response by activating Ca(2+)-dependent Cl(-) channels, but it also serves as a negative feedback signal to desensitize the channel for rapid adaptation to odorants. Conducts cGMP- and cAMP-gated ion currents, with permeability for monovalent and divalent cations. Conducts cAMP- and cGMP-gated ion currents, with permeability for monovalent and divalent cations (By similarity) (PubMed:11739959, PubMed:12649326). May conduct nitric oxide-gated Ca(2+) currents relevant to neurons of vomeronasal organ, a system involved in the perception of pheromones (By similarity).</text>
</comment>
<comment type="catalytic activity">
    <reaction evidence="4">
        <text>Ca(2+)(in) = Ca(2+)(out)</text>
        <dbReference type="Rhea" id="RHEA:29671"/>
        <dbReference type="ChEBI" id="CHEBI:29108"/>
    </reaction>
    <physiologicalReaction direction="right-to-left" evidence="4">
        <dbReference type="Rhea" id="RHEA:29673"/>
    </physiologicalReaction>
</comment>
<comment type="catalytic activity">
    <reaction evidence="4">
        <text>Na(+)(in) = Na(+)(out)</text>
        <dbReference type="Rhea" id="RHEA:34963"/>
        <dbReference type="ChEBI" id="CHEBI:29101"/>
    </reaction>
</comment>
<comment type="catalytic activity">
    <reaction evidence="4">
        <text>K(+)(in) = K(+)(out)</text>
        <dbReference type="Rhea" id="RHEA:29463"/>
        <dbReference type="ChEBI" id="CHEBI:29103"/>
    </reaction>
</comment>
<comment type="catalytic activity">
    <reaction evidence="3">
        <text>NH4(+)(in) = NH4(+)(out)</text>
        <dbReference type="Rhea" id="RHEA:28747"/>
        <dbReference type="ChEBI" id="CHEBI:28938"/>
    </reaction>
</comment>
<comment type="catalytic activity">
    <reaction evidence="3">
        <text>Rb(+)(in) = Rb(+)(out)</text>
        <dbReference type="Rhea" id="RHEA:78547"/>
        <dbReference type="ChEBI" id="CHEBI:49847"/>
    </reaction>
</comment>
<comment type="catalytic activity">
    <reaction evidence="3">
        <text>Li(+)(in) = Li(+)(out)</text>
        <dbReference type="Rhea" id="RHEA:78551"/>
        <dbReference type="ChEBI" id="CHEBI:49713"/>
    </reaction>
</comment>
<comment type="catalytic activity">
    <reaction evidence="3">
        <text>Cs(+)(in) = Cs(+)(out)</text>
        <dbReference type="Rhea" id="RHEA:78555"/>
        <dbReference type="ChEBI" id="CHEBI:49547"/>
    </reaction>
</comment>
<comment type="activity regulation">
    <text evidence="4 5">Ca(2+)-calmodulin exerts its inhibitory effect in cAMP sensitivity by binding to IQ-like motif of CNGA4 and preferably binds to the channel in the closed state. Inhibition by PIP3 of the CNG channel probably occurs via CGNA2 binding.</text>
</comment>
<comment type="subunit">
    <text evidence="4">The olfactory cyclic nucleotide-gated channel is an heterotetramer composed of CNGA2, CNGA4 and CNGB1b subunits with 2:1:1 stoichiometry.</text>
</comment>
<comment type="subcellular location">
    <subcellularLocation>
        <location evidence="4">Cell projection</location>
        <location evidence="4">Cilium membrane</location>
        <topology evidence="6">Multi-pass membrane protein</topology>
    </subcellularLocation>
</comment>
<comment type="alternative products">
    <event type="alternative splicing"/>
    <isoform>
        <id>Q3UW12-1</id>
        <name>1</name>
        <sequence type="displayed"/>
    </isoform>
    <isoform>
        <id>Q3UW12-2</id>
        <name>2</name>
        <sequence type="described" ref="VSP_030873"/>
    </isoform>
</comment>
<comment type="tissue specificity">
    <text evidence="8">Expressed in the olfactory epithelium.</text>
</comment>
<comment type="domain">
    <text evidence="1">The C-terminal coiled-coil domain mediates trimerization of CNGA subunits.</text>
</comment>
<comment type="similarity">
    <text evidence="12">Belongs to the cyclic nucleotide-gated cation channel (TC 1.A.1.5) family. CNGA4 subfamily.</text>
</comment>
<sequence length="575" mass="65835">MSQDSKVKTTESTPPAPTKARKWLPVLDPSGDYYYWWLNTMVFPIMYNLIIVVCRACFPDLQHSYLVAWFVLDYTSDLLYLLDIGVRFHTGFLEQGILVVDKSMIASRYVRTWSFLLDLASLVPTDAAYVQLGPHIPTLRLNRFLRVPRLFEAFDRTETRTAYPNAFRIAKLMIYIFVVIHWNSCLYFALSRYLGFGRDAWVYPDPAQPGFERLRRQYLYSFYFSTLILTTVGDTPLPAREEEYLFMVGDFLLAVMGFATIMGSMSSVIYNMNTADAAFYPDHALVKKYMKLQHVNRRLERRVIDWYQHLQINKKMTNEVAILQHLPERLRAEVAVSVHLSTLSRVQIFQNCEASLLEELVLKLQPQTYSPGEYVCRKGDIGREMYIIREGQLAVVADDGVTQYAVLGAGLYFGEISIINIKGNMSGNRRTANIKSLGYSDLFCLSKEDLREVLSEYPQAQAVMEEKGREILLKMNKLDVNAEAAEIALQEATESRLKGLDQQLDDLQTKFARLLAELESSALKIAYRIERLEWQTREWPMPDDMGEADDEAEPGEGTSKDGEEKAGQEGPSGLE</sequence>
<evidence type="ECO:0000250" key="1"/>
<evidence type="ECO:0000250" key="2">
    <source>
        <dbReference type="UniProtKB" id="P29973"/>
    </source>
</evidence>
<evidence type="ECO:0000250" key="3">
    <source>
        <dbReference type="UniProtKB" id="Q00194"/>
    </source>
</evidence>
<evidence type="ECO:0000250" key="4">
    <source>
        <dbReference type="UniProtKB" id="Q64359"/>
    </source>
</evidence>
<evidence type="ECO:0000250" key="5">
    <source>
        <dbReference type="UniProtKB" id="Q8IV77"/>
    </source>
</evidence>
<evidence type="ECO:0000255" key="6"/>
<evidence type="ECO:0000256" key="7">
    <source>
        <dbReference type="SAM" id="MobiDB-lite"/>
    </source>
</evidence>
<evidence type="ECO:0000269" key="8">
    <source>
    </source>
</evidence>
<evidence type="ECO:0000269" key="9">
    <source>
    </source>
</evidence>
<evidence type="ECO:0000303" key="10">
    <source>
    </source>
</evidence>
<evidence type="ECO:0000303" key="11">
    <source>
    </source>
</evidence>
<evidence type="ECO:0000305" key="12"/>
<evidence type="ECO:0000312" key="13">
    <source>
        <dbReference type="MGI" id="MGI:2664099"/>
    </source>
</evidence>
<protein>
    <recommendedName>
        <fullName>Cyclic nucleotide-gated channel alpha-4</fullName>
        <shortName>CNG channel alpha-4</shortName>
        <shortName evidence="10">CNGa4</shortName>
    </recommendedName>
    <alternativeName>
        <fullName>Olfactory cyclic nucleotide-gated channel subunit 2</fullName>
        <shortName evidence="10">OCNC2</shortName>
    </alternativeName>
</protein>
<accession>Q3UW12</accession>
<accession>Q08EL1</accession>
<proteinExistence type="evidence at transcript level"/>
<name>CNGA4_MOUSE</name>